<evidence type="ECO:0000250" key="1"/>
<evidence type="ECO:0000255" key="2">
    <source>
        <dbReference type="PROSITE-ProRule" id="PRU00978"/>
    </source>
</evidence>
<evidence type="ECO:0000256" key="3">
    <source>
        <dbReference type="SAM" id="MobiDB-lite"/>
    </source>
</evidence>
<evidence type="ECO:0000269" key="4">
    <source>
    </source>
</evidence>
<evidence type="ECO:0000305" key="5"/>
<feature type="chain" id="PRO_0000252296" description="Transcriptional activator hacA">
    <location>
        <begin position="1"/>
        <end position="350"/>
    </location>
</feature>
<feature type="domain" description="bZIP" evidence="2">
    <location>
        <begin position="87"/>
        <end position="150"/>
    </location>
</feature>
<feature type="region of interest" description="Disordered" evidence="3">
    <location>
        <begin position="1"/>
        <end position="118"/>
    </location>
</feature>
<feature type="region of interest" description="Basic motif" evidence="2">
    <location>
        <begin position="89"/>
        <end position="142"/>
    </location>
</feature>
<feature type="region of interest" description="Leucine-zipper" evidence="2">
    <location>
        <begin position="143"/>
        <end position="150"/>
    </location>
</feature>
<feature type="region of interest" description="Disordered" evidence="3">
    <location>
        <begin position="152"/>
        <end position="175"/>
    </location>
</feature>
<feature type="region of interest" description="Disordered" evidence="3">
    <location>
        <begin position="194"/>
        <end position="218"/>
    </location>
</feature>
<feature type="region of interest" description="Disordered" evidence="3">
    <location>
        <begin position="328"/>
        <end position="350"/>
    </location>
</feature>
<feature type="compositionally biased region" description="Polar residues" evidence="3">
    <location>
        <begin position="35"/>
        <end position="47"/>
    </location>
</feature>
<feature type="compositionally biased region" description="Basic and acidic residues" evidence="3">
    <location>
        <begin position="81"/>
        <end position="95"/>
    </location>
</feature>
<feature type="compositionally biased region" description="Basic and acidic residues" evidence="3">
    <location>
        <begin position="104"/>
        <end position="118"/>
    </location>
</feature>
<feature type="compositionally biased region" description="Low complexity" evidence="3">
    <location>
        <begin position="160"/>
        <end position="175"/>
    </location>
</feature>
<feature type="compositionally biased region" description="Polar residues" evidence="3">
    <location>
        <begin position="196"/>
        <end position="211"/>
    </location>
</feature>
<feature type="compositionally biased region" description="Polar residues" evidence="3">
    <location>
        <begin position="329"/>
        <end position="340"/>
    </location>
</feature>
<feature type="splice variant" id="VSP_020903" description="In isoform U." evidence="5">
    <original>VSVGGLEGDESALTLFDLGASIKHEPTHDLTAPLSDDDFRRLFNGDSSLESDSSLLEDGFAFDVLDSGDLSAFPFDSMVDFDTEPVTLEDLEQTNGLSDSASCKAASLQPSHGASTSRCDGQGIAAGSA</original>
    <variation>AMLCDLQCQSAGSKEMKVPSRFSTSEPALSMSLHMTLQLLFLTMTSAAYSTVIHPLSQILHSLKTGSPLTFSTQEIYQHFHLILWLILTPSLSPSKISSKPTAFRIQLLARLLACNPAMARPLRDATGRALQLAVRERFSTEDRLVPDVVEGRWSWESLLTLASAINLLEKPERRRRTLRGLDSLKRGRRIDSGKRYRVIRSSRSSTSPREALTSRRKGL</variation>
    <location>
        <begin position="222"/>
        <end position="350"/>
    </location>
</feature>
<feature type="sequence conflict" description="In Ref. 1; CAC88375." evidence="5" ref="1">
    <original>Q</original>
    <variation>R</variation>
    <location>
        <position position="41"/>
    </location>
</feature>
<proteinExistence type="evidence at transcript level"/>
<dbReference type="EMBL" id="AJ413273">
    <property type="protein sequence ID" value="CAC88375.1"/>
    <property type="molecule type" value="Genomic_DNA"/>
</dbReference>
<dbReference type="EMBL" id="AACD01000172">
    <property type="protein sequence ID" value="EAA66464.1"/>
    <property type="status" value="ALT_SEQ"/>
    <property type="molecule type" value="Genomic_DNA"/>
</dbReference>
<dbReference type="EMBL" id="BN001308">
    <property type="protein sequence ID" value="CBF87535.1"/>
    <property type="molecule type" value="Genomic_DNA"/>
</dbReference>
<dbReference type="RefSeq" id="XP_682666.1">
    <property type="nucleotide sequence ID" value="XM_677574.1"/>
</dbReference>
<dbReference type="SMR" id="Q8TFU8"/>
<dbReference type="FunCoup" id="Q8TFU8">
    <property type="interactions" value="673"/>
</dbReference>
<dbReference type="STRING" id="227321.Q8TFU8"/>
<dbReference type="EnsemblFungi" id="CBF87535">
    <molecule id="Q8TFU8-2"/>
    <property type="protein sequence ID" value="CBF87535"/>
    <property type="gene ID" value="ANIA_09397"/>
</dbReference>
<dbReference type="eggNOG" id="ENOG502S526">
    <property type="taxonomic scope" value="Eukaryota"/>
</dbReference>
<dbReference type="HOGENOM" id="CLU_035741_0_0_1"/>
<dbReference type="InParanoid" id="Q8TFU8"/>
<dbReference type="OMA" id="CDLQCQL"/>
<dbReference type="Proteomes" id="UP000000560">
    <property type="component" value="Chromosome VIII"/>
</dbReference>
<dbReference type="GO" id="GO:0005634">
    <property type="term" value="C:nucleus"/>
    <property type="evidence" value="ECO:0007669"/>
    <property type="project" value="UniProtKB-SubCell"/>
</dbReference>
<dbReference type="GO" id="GO:0003677">
    <property type="term" value="F:DNA binding"/>
    <property type="evidence" value="ECO:0007669"/>
    <property type="project" value="UniProtKB-KW"/>
</dbReference>
<dbReference type="GO" id="GO:0000981">
    <property type="term" value="F:DNA-binding transcription factor activity, RNA polymerase II-specific"/>
    <property type="evidence" value="ECO:0007669"/>
    <property type="project" value="InterPro"/>
</dbReference>
<dbReference type="GO" id="GO:0045944">
    <property type="term" value="P:positive regulation of transcription by RNA polymerase II"/>
    <property type="evidence" value="ECO:0007669"/>
    <property type="project" value="InterPro"/>
</dbReference>
<dbReference type="GO" id="GO:0006986">
    <property type="term" value="P:response to unfolded protein"/>
    <property type="evidence" value="ECO:0007669"/>
    <property type="project" value="UniProtKB-KW"/>
</dbReference>
<dbReference type="CDD" id="cd14710">
    <property type="entry name" value="bZIP_HAC1-like"/>
    <property type="match status" value="1"/>
</dbReference>
<dbReference type="FunFam" id="1.20.5.170:FF:000101">
    <property type="entry name" value="BZIP transcription factor HacA"/>
    <property type="match status" value="1"/>
</dbReference>
<dbReference type="Gene3D" id="1.20.5.170">
    <property type="match status" value="1"/>
</dbReference>
<dbReference type="InterPro" id="IPR004827">
    <property type="entry name" value="bZIP"/>
</dbReference>
<dbReference type="InterPro" id="IPR046347">
    <property type="entry name" value="bZIP_sf"/>
</dbReference>
<dbReference type="InterPro" id="IPR044280">
    <property type="entry name" value="Hac1/HY5"/>
</dbReference>
<dbReference type="PANTHER" id="PTHR46714">
    <property type="entry name" value="TRANSCRIPTIONAL ACTIVATOR HAC1"/>
    <property type="match status" value="1"/>
</dbReference>
<dbReference type="PANTHER" id="PTHR46714:SF6">
    <property type="entry name" value="TRANSCRIPTIONAL ACTIVATOR HAC1"/>
    <property type="match status" value="1"/>
</dbReference>
<dbReference type="Pfam" id="PF07716">
    <property type="entry name" value="bZIP_2"/>
    <property type="match status" value="1"/>
</dbReference>
<dbReference type="SMART" id="SM00338">
    <property type="entry name" value="BRLZ"/>
    <property type="match status" value="1"/>
</dbReference>
<dbReference type="SUPFAM" id="SSF57959">
    <property type="entry name" value="Leucine zipper domain"/>
    <property type="match status" value="1"/>
</dbReference>
<dbReference type="PROSITE" id="PS50217">
    <property type="entry name" value="BZIP"/>
    <property type="match status" value="1"/>
</dbReference>
<dbReference type="PROSITE" id="PS00036">
    <property type="entry name" value="BZIP_BASIC"/>
    <property type="match status" value="1"/>
</dbReference>
<name>HAC1_EMENI</name>
<keyword id="KW-0010">Activator</keyword>
<keyword id="KW-0025">Alternative splicing</keyword>
<keyword id="KW-0238">DNA-binding</keyword>
<keyword id="KW-0539">Nucleus</keyword>
<keyword id="KW-1185">Reference proteome</keyword>
<keyword id="KW-0804">Transcription</keyword>
<keyword id="KW-0805">Transcription regulation</keyword>
<keyword id="KW-0834">Unfolded protein response</keyword>
<organism>
    <name type="scientific">Emericella nidulans (strain FGSC A4 / ATCC 38163 / CBS 112.46 / NRRL 194 / M139)</name>
    <name type="common">Aspergillus nidulans</name>
    <dbReference type="NCBI Taxonomy" id="227321"/>
    <lineage>
        <taxon>Eukaryota</taxon>
        <taxon>Fungi</taxon>
        <taxon>Dikarya</taxon>
        <taxon>Ascomycota</taxon>
        <taxon>Pezizomycotina</taxon>
        <taxon>Eurotiomycetes</taxon>
        <taxon>Eurotiomycetidae</taxon>
        <taxon>Eurotiales</taxon>
        <taxon>Aspergillaceae</taxon>
        <taxon>Aspergillus</taxon>
        <taxon>Aspergillus subgen. Nidulantes</taxon>
    </lineage>
</organism>
<accession>Q8TFU8</accession>
<accession>C8VRK0</accession>
<accession>Q5AQN3</accession>
<protein>
    <recommendedName>
        <fullName>Transcriptional activator hacA</fullName>
    </recommendedName>
</protein>
<reference key="1">
    <citation type="journal article" date="2003" name="Mol. Microbiol.">
        <title>Activation mechanisms of the HAC1-mediated unfolded protein response in filamentous fungi.</title>
        <authorList>
            <person name="Saloheimo M.L.A."/>
            <person name="Valkonen M."/>
            <person name="Penttilae M.E."/>
        </authorList>
    </citation>
    <scope>NUCLEOTIDE SEQUENCE [GENOMIC DNA]</scope>
    <scope>ALTERNATIVE SPLICING</scope>
    <scope>INDUCTION</scope>
    <source>
        <strain>FGSC 26</strain>
    </source>
</reference>
<reference key="2">
    <citation type="journal article" date="2005" name="Nature">
        <title>Sequencing of Aspergillus nidulans and comparative analysis with A. fumigatus and A. oryzae.</title>
        <authorList>
            <person name="Galagan J.E."/>
            <person name="Calvo S.E."/>
            <person name="Cuomo C."/>
            <person name="Ma L.-J."/>
            <person name="Wortman J.R."/>
            <person name="Batzoglou S."/>
            <person name="Lee S.-I."/>
            <person name="Bastuerkmen M."/>
            <person name="Spevak C.C."/>
            <person name="Clutterbuck J."/>
            <person name="Kapitonov V."/>
            <person name="Jurka J."/>
            <person name="Scazzocchio C."/>
            <person name="Farman M.L."/>
            <person name="Butler J."/>
            <person name="Purcell S."/>
            <person name="Harris S."/>
            <person name="Braus G.H."/>
            <person name="Draht O."/>
            <person name="Busch S."/>
            <person name="D'Enfert C."/>
            <person name="Bouchier C."/>
            <person name="Goldman G.H."/>
            <person name="Bell-Pedersen D."/>
            <person name="Griffiths-Jones S."/>
            <person name="Doonan J.H."/>
            <person name="Yu J."/>
            <person name="Vienken K."/>
            <person name="Pain A."/>
            <person name="Freitag M."/>
            <person name="Selker E.U."/>
            <person name="Archer D.B."/>
            <person name="Penalva M.A."/>
            <person name="Oakley B.R."/>
            <person name="Momany M."/>
            <person name="Tanaka T."/>
            <person name="Kumagai T."/>
            <person name="Asai K."/>
            <person name="Machida M."/>
            <person name="Nierman W.C."/>
            <person name="Denning D.W."/>
            <person name="Caddick M.X."/>
            <person name="Hynes M."/>
            <person name="Paoletti M."/>
            <person name="Fischer R."/>
            <person name="Miller B.L."/>
            <person name="Dyer P.S."/>
            <person name="Sachs M.S."/>
            <person name="Osmani S.A."/>
            <person name="Birren B.W."/>
        </authorList>
    </citation>
    <scope>NUCLEOTIDE SEQUENCE [LARGE SCALE GENOMIC DNA]</scope>
    <source>
        <strain>FGSC A4 / ATCC 38163 / CBS 112.46 / NRRL 194 / M139</strain>
    </source>
</reference>
<reference key="3">
    <citation type="journal article" date="2009" name="Fungal Genet. Biol.">
        <title>The 2008 update of the Aspergillus nidulans genome annotation: a community effort.</title>
        <authorList>
            <person name="Wortman J.R."/>
            <person name="Gilsenan J.M."/>
            <person name="Joardar V."/>
            <person name="Deegan J."/>
            <person name="Clutterbuck J."/>
            <person name="Andersen M.R."/>
            <person name="Archer D."/>
            <person name="Bencina M."/>
            <person name="Braus G."/>
            <person name="Coutinho P."/>
            <person name="von Dohren H."/>
            <person name="Doonan J."/>
            <person name="Driessen A.J."/>
            <person name="Durek P."/>
            <person name="Espeso E."/>
            <person name="Fekete E."/>
            <person name="Flipphi M."/>
            <person name="Estrada C.G."/>
            <person name="Geysens S."/>
            <person name="Goldman G."/>
            <person name="de Groot P.W."/>
            <person name="Hansen K."/>
            <person name="Harris S.D."/>
            <person name="Heinekamp T."/>
            <person name="Helmstaedt K."/>
            <person name="Henrissat B."/>
            <person name="Hofmann G."/>
            <person name="Homan T."/>
            <person name="Horio T."/>
            <person name="Horiuchi H."/>
            <person name="James S."/>
            <person name="Jones M."/>
            <person name="Karaffa L."/>
            <person name="Karanyi Z."/>
            <person name="Kato M."/>
            <person name="Keller N."/>
            <person name="Kelly D.E."/>
            <person name="Kiel J.A."/>
            <person name="Kim J.M."/>
            <person name="van der Klei I.J."/>
            <person name="Klis F.M."/>
            <person name="Kovalchuk A."/>
            <person name="Krasevec N."/>
            <person name="Kubicek C.P."/>
            <person name="Liu B."/>
            <person name="Maccabe A."/>
            <person name="Meyer V."/>
            <person name="Mirabito P."/>
            <person name="Miskei M."/>
            <person name="Mos M."/>
            <person name="Mullins J."/>
            <person name="Nelson D.R."/>
            <person name="Nielsen J."/>
            <person name="Oakley B.R."/>
            <person name="Osmani S.A."/>
            <person name="Pakula T."/>
            <person name="Paszewski A."/>
            <person name="Paulsen I."/>
            <person name="Pilsyk S."/>
            <person name="Pocsi I."/>
            <person name="Punt P.J."/>
            <person name="Ram A.F."/>
            <person name="Ren Q."/>
            <person name="Robellet X."/>
            <person name="Robson G."/>
            <person name="Seiboth B."/>
            <person name="van Solingen P."/>
            <person name="Specht T."/>
            <person name="Sun J."/>
            <person name="Taheri-Talesh N."/>
            <person name="Takeshita N."/>
            <person name="Ussery D."/>
            <person name="vanKuyk P.A."/>
            <person name="Visser H."/>
            <person name="van de Vondervoort P.J."/>
            <person name="de Vries R.P."/>
            <person name="Walton J."/>
            <person name="Xiang X."/>
            <person name="Xiong Y."/>
            <person name="Zeng A.P."/>
            <person name="Brandt B.W."/>
            <person name="Cornell M.J."/>
            <person name="van den Hondel C.A."/>
            <person name="Visser J."/>
            <person name="Oliver S.G."/>
            <person name="Turner G."/>
        </authorList>
    </citation>
    <scope>GENOME REANNOTATION</scope>
    <source>
        <strain>FGSC A4 / ATCC 38163 / CBS 112.46 / NRRL 194 / M139</strain>
    </source>
</reference>
<gene>
    <name type="primary">hacA</name>
    <name type="ORF">AN9397</name>
</gene>
<sequence length="350" mass="38164">MKSADRFSPVKMEDAFANSLPTTPSLEVPVLTVSPADTSLQTKNVVAQTKPEEKKPAKKRKSWGQELPVPKTNLPPRKRAKTEDEKEQRRIERVLRNRAAAQTSRERKRLEMEKLESEKIDMEQQNQFLLQRLAQMEAENNRLSQQVAQLSAEVRGSRHSTPTSSSPASVSPTLTPTLFKQEGDEVPLDRIPFPTPSVTDYSPTLKPSSLAESPDLTQHPAVSVGGLEGDESALTLFDLGASIKHEPTHDLTAPLSDDDFRRLFNGDSSLESDSSLLEDGFAFDVLDSGDLSAFPFDSMVDFDTEPVTLEDLEQTNGLSDSASCKAASLQPSHGASTSRCDGQGIAAGSA</sequence>
<comment type="function">
    <text evidence="1">Transcriptional activator involved in the unfolded protein response (UPR) pathway. Recognizes and binds to the UPR element (UPRE) in the promoter of UPR-regulated genes. Increases the synthesis of endoplasmic reticulum-resident proteins required for protein folding as well as components of the secretory pathway (By similarity).</text>
</comment>
<comment type="subunit">
    <text evidence="1">Homodimer.</text>
</comment>
<comment type="subcellular location">
    <subcellularLocation>
        <location evidence="5">Nucleus</location>
    </subcellularLocation>
</comment>
<comment type="alternative products">
    <event type="alternative splicing"/>
    <isoform>
        <id>Q8TFU8-1</id>
        <name>I</name>
        <name>Induced</name>
        <sequence type="displayed"/>
    </isoform>
    <isoform>
        <id>Q8TFU8-2</id>
        <name>U</name>
        <name>Uninduced</name>
        <sequence type="described" ref="VSP_020903"/>
    </isoform>
    <text>Splicing occurs by a non-spliceosomal, regulated splicing mechanism when UPR is induced.</text>
</comment>
<comment type="induction">
    <text evidence="4">By the unfolded protein response pathway. Accumulation of unfolded proteins in the ER leads to splicing of the hacA precursor mRNA to produce the mature form.</text>
</comment>
<comment type="miscellaneous">
    <molecule>Isoform I</molecule>
    <text>Induced and active isoform.</text>
</comment>
<comment type="miscellaneous">
    <molecule>Isoform U</molecule>
    <text evidence="5">Probably not translated.</text>
</comment>
<comment type="similarity">
    <text evidence="5">Belongs to the bZIP family.</text>
</comment>
<comment type="sequence caution" evidence="5">
    <conflict type="erroneous gene model prediction">
        <sequence resource="EMBL-CDS" id="EAA66464"/>
    </conflict>
</comment>